<feature type="chain" id="PRO_0000213517" description="Conserved oligomeric Golgi complex subunit 6">
    <location>
        <begin position="1"/>
        <end position="839"/>
    </location>
</feature>
<feature type="region of interest" description="Disordered" evidence="2">
    <location>
        <begin position="14"/>
        <end position="38"/>
    </location>
</feature>
<dbReference type="EMBL" id="Z71317">
    <property type="protein sequence ID" value="CAA95908.1"/>
    <property type="molecule type" value="Genomic_DNA"/>
</dbReference>
<dbReference type="EMBL" id="BK006947">
    <property type="protein sequence ID" value="DAA10504.1"/>
    <property type="molecule type" value="Genomic_DNA"/>
</dbReference>
<dbReference type="PIR" id="S62963">
    <property type="entry name" value="S62963"/>
</dbReference>
<dbReference type="RefSeq" id="NP_014357.1">
    <property type="nucleotide sequence ID" value="NM_001182880.1"/>
</dbReference>
<dbReference type="SMR" id="P53959"/>
<dbReference type="BioGRID" id="35783">
    <property type="interactions" value="536"/>
</dbReference>
<dbReference type="ComplexPortal" id="CPX-1840">
    <property type="entry name" value="COG Golgi transport complex"/>
</dbReference>
<dbReference type="DIP" id="DIP-4373N"/>
<dbReference type="FunCoup" id="P53959">
    <property type="interactions" value="321"/>
</dbReference>
<dbReference type="IntAct" id="P53959">
    <property type="interactions" value="18"/>
</dbReference>
<dbReference type="MINT" id="P53959"/>
<dbReference type="STRING" id="4932.YNL041C"/>
<dbReference type="iPTMnet" id="P53959"/>
<dbReference type="PaxDb" id="4932-YNL041C"/>
<dbReference type="PeptideAtlas" id="P53959"/>
<dbReference type="EnsemblFungi" id="YNL041C_mRNA">
    <property type="protein sequence ID" value="YNL041C"/>
    <property type="gene ID" value="YNL041C"/>
</dbReference>
<dbReference type="GeneID" id="855687"/>
<dbReference type="KEGG" id="sce:YNL041C"/>
<dbReference type="AGR" id="SGD:S000004986"/>
<dbReference type="SGD" id="S000004986">
    <property type="gene designation" value="COG6"/>
</dbReference>
<dbReference type="VEuPathDB" id="FungiDB:YNL041C"/>
<dbReference type="eggNOG" id="KOG3758">
    <property type="taxonomic scope" value="Eukaryota"/>
</dbReference>
<dbReference type="GeneTree" id="ENSGT00390000013518"/>
<dbReference type="HOGENOM" id="CLU_017837_0_0_1"/>
<dbReference type="InParanoid" id="P53959"/>
<dbReference type="OMA" id="IINMICP"/>
<dbReference type="OrthoDB" id="272987at2759"/>
<dbReference type="BioCyc" id="YEAST:G3O-33077-MONOMER"/>
<dbReference type="BioGRID-ORCS" id="855687">
    <property type="hits" value="0 hits in 10 CRISPR screens"/>
</dbReference>
<dbReference type="PRO" id="PR:P53959"/>
<dbReference type="Proteomes" id="UP000002311">
    <property type="component" value="Chromosome XIV"/>
</dbReference>
<dbReference type="RNAct" id="P53959">
    <property type="molecule type" value="protein"/>
</dbReference>
<dbReference type="GO" id="GO:0000139">
    <property type="term" value="C:Golgi membrane"/>
    <property type="evidence" value="ECO:0000303"/>
    <property type="project" value="ComplexPortal"/>
</dbReference>
<dbReference type="GO" id="GO:0017119">
    <property type="term" value="C:Golgi transport complex"/>
    <property type="evidence" value="ECO:0000315"/>
    <property type="project" value="SGD"/>
</dbReference>
<dbReference type="GO" id="GO:0032258">
    <property type="term" value="P:cytoplasm to vacuole targeting by the Cvt pathway"/>
    <property type="evidence" value="ECO:0000315"/>
    <property type="project" value="SGD"/>
</dbReference>
<dbReference type="GO" id="GO:0006891">
    <property type="term" value="P:intra-Golgi vesicle-mediated transport"/>
    <property type="evidence" value="ECO:0000315"/>
    <property type="project" value="SGD"/>
</dbReference>
<dbReference type="GO" id="GO:0000301">
    <property type="term" value="P:retrograde transport, vesicle recycling within Golgi"/>
    <property type="evidence" value="ECO:0000303"/>
    <property type="project" value="ComplexPortal"/>
</dbReference>
<dbReference type="InterPro" id="IPR010490">
    <property type="entry name" value="COG6"/>
</dbReference>
<dbReference type="InterPro" id="IPR048369">
    <property type="entry name" value="COG6_C"/>
</dbReference>
<dbReference type="InterPro" id="IPR048368">
    <property type="entry name" value="COG6_N"/>
</dbReference>
<dbReference type="PANTHER" id="PTHR21506">
    <property type="entry name" value="COMPONENT OF OLIGOMERIC GOLGI COMPLEX 6"/>
    <property type="match status" value="1"/>
</dbReference>
<dbReference type="PANTHER" id="PTHR21506:SF0">
    <property type="entry name" value="CONSERVED OLIGOMERIC GOLGI COMPLEX SUBUNIT 6"/>
    <property type="match status" value="1"/>
</dbReference>
<dbReference type="Pfam" id="PF20653">
    <property type="entry name" value="COG6_C"/>
    <property type="match status" value="1"/>
</dbReference>
<dbReference type="Pfam" id="PF06419">
    <property type="entry name" value="COG6_N"/>
    <property type="match status" value="1"/>
</dbReference>
<dbReference type="SMART" id="SM01087">
    <property type="entry name" value="COG6"/>
    <property type="match status" value="1"/>
</dbReference>
<name>COG6_YEAST</name>
<keyword id="KW-0333">Golgi apparatus</keyword>
<keyword id="KW-0472">Membrane</keyword>
<keyword id="KW-0653">Protein transport</keyword>
<keyword id="KW-1185">Reference proteome</keyword>
<keyword id="KW-0813">Transport</keyword>
<gene>
    <name type="primary">COG6</name>
    <name type="synonym">COD2</name>
    <name type="synonym">SEC37</name>
    <name type="synonym">TFI2</name>
    <name type="ordered locus">YNL041C</name>
    <name type="ORF">N2675</name>
</gene>
<comment type="function">
    <text evidence="4 5">Acts as a component of the peripheral membrane COG complex that is involved in intra-Golgi protein trafficking. COG is located at the cis-Golgi, and regulates tethering of retrograde intra-Golgi vesicles and possibly a number of other membrane trafficking events.</text>
</comment>
<comment type="subunit">
    <text evidence="3 4 5">Component of the conserved oligomeric Golgi (COG or Sec34/Sec35) complex which consists of eight different proteins COG1-COG8.</text>
</comment>
<comment type="interaction">
    <interactant intactId="EBI-4829">
        <id>P53959</id>
    </interactant>
    <interactant intactId="EBI-4835">
        <id>P53079</id>
        <label>COG1</label>
    </interactant>
    <organismsDiffer>false</organismsDiffer>
    <experiments>6</experiments>
</comment>
<comment type="interaction">
    <interactant intactId="EBI-4829">
        <id>P53959</id>
    </interactant>
    <interactant intactId="EBI-16614">
        <id>P53271</id>
        <label>COG2</label>
    </interactant>
    <organismsDiffer>false</organismsDiffer>
    <experiments>3</experiments>
</comment>
<comment type="interaction">
    <interactant intactId="EBI-4829">
        <id>P53959</id>
    </interactant>
    <interactant intactId="EBI-16605">
        <id>P40094</id>
        <label>COG3</label>
    </interactant>
    <organismsDiffer>false</organismsDiffer>
    <experiments>4</experiments>
</comment>
<comment type="interaction">
    <interactant intactId="EBI-4829">
        <id>P53959</id>
    </interactant>
    <interactant intactId="EBI-4823">
        <id>Q06096</id>
        <label>COG4</label>
    </interactant>
    <organismsDiffer>false</organismsDiffer>
    <experiments>3</experiments>
</comment>
<comment type="interaction">
    <interactant intactId="EBI-4829">
        <id>P53959</id>
    </interactant>
    <interactant intactId="EBI-4841">
        <id>P53951</id>
        <label>COG5</label>
    </interactant>
    <organismsDiffer>false</organismsDiffer>
    <experiments>3</experiments>
</comment>
<comment type="interaction">
    <interactant intactId="EBI-4829">
        <id>P53959</id>
    </interactant>
    <interactant intactId="EBI-4847">
        <id>P53195</id>
        <label>COG7</label>
    </interactant>
    <organismsDiffer>false</organismsDiffer>
    <experiments>4</experiments>
</comment>
<comment type="interaction">
    <interactant intactId="EBI-4829">
        <id>P53959</id>
    </interactant>
    <interactant intactId="EBI-6035">
        <id>Q04632</id>
        <label>COG8</label>
    </interactant>
    <organismsDiffer>false</organismsDiffer>
    <experiments>6</experiments>
</comment>
<comment type="subcellular location">
    <subcellularLocation>
        <location evidence="1">Golgi apparatus membrane</location>
        <topology evidence="1">Peripheral membrane protein</topology>
    </subcellularLocation>
</comment>
<comment type="miscellaneous">
    <text evidence="6">Present with 1720 molecules/cell in log phase SD medium.</text>
</comment>
<comment type="similarity">
    <text evidence="7">Belongs to the COG6 family.</text>
</comment>
<sequence length="839" mass="96976">MDFVVDYQTYAMADTATPELPEPEPRLNLTSDAQSQPTGKLDLQFKLPDLQRYSNNNATLPVDNDGAGSKDLHKKMTHYAMSSIDKIQLSNPSKQLGQNSQDEKLSQQESQNFTNYEPKNLDLSKLVSPSSGSNKNTTNLVLSNKLSKILNNYTLINYQATVQLRKSLKVLEENKERLSLDEQKLMNPEYVGTLARRALRTDLESQLLKEHITVLEEFKPIIRRIKRLSSSVEKIQRTSEKLLSNETNEVPTNNVVLQEIDQYRLKAEQLKLKKKILLSIRDRFTLNQVEDDVITNGTIDNIFFEVVKKVINIKDESSFLLTLPNLNAGNALIMGVNEILEKTNKKIFNYLIDFLYSFESSSNLLNDHGTTEQESLNIFRKSLVFLSSDLELFNELLKRVTTLRSKSILDEFLSQFDMNSTTSKPIILSAHDPIRYIGDVLASVHSIIANEADFVKSLFDFQDEDLKDTPISILQQNKTFLKGIDNKLLNDIIQSLSNSCRIRIEQIVRFEENPIINFEIVRLLKLYRVMFERKGIQDDSSIINNLKSLEDISKNRIIGYYEDYMKQTVMAETKNSSDDLLPPEWLSEYMNKLVELFEIYEKTHAAEDEESEDNKLLSSKNLQTIVEQPIKDVLLKQLQTSFPLAKKNEKEKASLLTIEINCFDLIKSRLQPFEGLFAQDDDSRKITIWVCDKLKEYTKQMLTLQIKFLFENTGLDLYSNLVNMIFPVDSVKDELDYDMYLALRDNSLMELDMVRKNVHDKLNYYLPQALTDVQGNLLFKLTSPMIADEICDECFKKLSLFYNIFRKLLIHLYPNKKDQVFEILNFSTDEFDMLIGIDH</sequence>
<accession>P53959</accession>
<accession>D6W1D8</accession>
<proteinExistence type="evidence at protein level"/>
<protein>
    <recommendedName>
        <fullName>Conserved oligomeric Golgi complex subunit 6</fullName>
        <shortName>COG complex subunit 6</shortName>
    </recommendedName>
    <alternativeName>
        <fullName>Complexed with DOR1 protein 2</fullName>
    </alternativeName>
    <alternativeName>
        <fullName>Component of oligomeric Golgi complex 6</fullName>
    </alternativeName>
    <alternativeName>
        <fullName>Protein SEC37</fullName>
    </alternativeName>
</protein>
<organism>
    <name type="scientific">Saccharomyces cerevisiae (strain ATCC 204508 / S288c)</name>
    <name type="common">Baker's yeast</name>
    <dbReference type="NCBI Taxonomy" id="559292"/>
    <lineage>
        <taxon>Eukaryota</taxon>
        <taxon>Fungi</taxon>
        <taxon>Dikarya</taxon>
        <taxon>Ascomycota</taxon>
        <taxon>Saccharomycotina</taxon>
        <taxon>Saccharomycetes</taxon>
        <taxon>Saccharomycetales</taxon>
        <taxon>Saccharomycetaceae</taxon>
        <taxon>Saccharomyces</taxon>
    </lineage>
</organism>
<reference key="1">
    <citation type="journal article" date="1997" name="Nature">
        <title>The nucleotide sequence of Saccharomyces cerevisiae chromosome XIV and its evolutionary implications.</title>
        <authorList>
            <person name="Philippsen P."/>
            <person name="Kleine K."/>
            <person name="Poehlmann R."/>
            <person name="Duesterhoeft A."/>
            <person name="Hamberg K."/>
            <person name="Hegemann J.H."/>
            <person name="Obermaier B."/>
            <person name="Urrestarazu L.A."/>
            <person name="Aert R."/>
            <person name="Albermann K."/>
            <person name="Altmann R."/>
            <person name="Andre B."/>
            <person name="Baladron V."/>
            <person name="Ballesta J.P.G."/>
            <person name="Becam A.-M."/>
            <person name="Beinhauer J.D."/>
            <person name="Boskovic J."/>
            <person name="Buitrago M.J."/>
            <person name="Bussereau F."/>
            <person name="Coster F."/>
            <person name="Crouzet M."/>
            <person name="D'Angelo M."/>
            <person name="Dal Pero F."/>
            <person name="De Antoni A."/>
            <person name="del Rey F."/>
            <person name="Doignon F."/>
            <person name="Domdey H."/>
            <person name="Dubois E."/>
            <person name="Fiedler T.A."/>
            <person name="Fleig U."/>
            <person name="Floeth M."/>
            <person name="Fritz C."/>
            <person name="Gaillardin C."/>
            <person name="Garcia-Cantalejo J.M."/>
            <person name="Glansdorff N."/>
            <person name="Goffeau A."/>
            <person name="Gueldener U."/>
            <person name="Herbert C.J."/>
            <person name="Heumann K."/>
            <person name="Heuss-Neitzel D."/>
            <person name="Hilbert H."/>
            <person name="Hinni K."/>
            <person name="Iraqui Houssaini I."/>
            <person name="Jacquet M."/>
            <person name="Jimenez A."/>
            <person name="Jonniaux J.-L."/>
            <person name="Karpfinger-Hartl L."/>
            <person name="Lanfranchi G."/>
            <person name="Lepingle A."/>
            <person name="Levesque H."/>
            <person name="Lyck R."/>
            <person name="Maftahi M."/>
            <person name="Mallet L."/>
            <person name="Maurer C.T.C."/>
            <person name="Messenguy F."/>
            <person name="Mewes H.-W."/>
            <person name="Moestl D."/>
            <person name="Nasr F."/>
            <person name="Nicaud J.-M."/>
            <person name="Niedenthal R.K."/>
            <person name="Pandolfo D."/>
            <person name="Pierard A."/>
            <person name="Piravandi E."/>
            <person name="Planta R.J."/>
            <person name="Pohl T.M."/>
            <person name="Purnelle B."/>
            <person name="Rebischung C."/>
            <person name="Remacha M.A."/>
            <person name="Revuelta J.L."/>
            <person name="Rinke M."/>
            <person name="Saiz J.E."/>
            <person name="Sartorello F."/>
            <person name="Scherens B."/>
            <person name="Sen-Gupta M."/>
            <person name="Soler-Mira A."/>
            <person name="Urbanus J.H.M."/>
            <person name="Valle G."/>
            <person name="Van Dyck L."/>
            <person name="Verhasselt P."/>
            <person name="Vierendeels F."/>
            <person name="Vissers S."/>
            <person name="Voet M."/>
            <person name="Volckaert G."/>
            <person name="Wach A."/>
            <person name="Wambutt R."/>
            <person name="Wedler H."/>
            <person name="Zollner A."/>
            <person name="Hani J."/>
        </authorList>
    </citation>
    <scope>NUCLEOTIDE SEQUENCE [LARGE SCALE GENOMIC DNA]</scope>
    <source>
        <strain>ATCC 204508 / S288c</strain>
    </source>
</reference>
<reference key="2">
    <citation type="journal article" date="2014" name="G3 (Bethesda)">
        <title>The reference genome sequence of Saccharomyces cerevisiae: Then and now.</title>
        <authorList>
            <person name="Engel S.R."/>
            <person name="Dietrich F.S."/>
            <person name="Fisk D.G."/>
            <person name="Binkley G."/>
            <person name="Balakrishnan R."/>
            <person name="Costanzo M.C."/>
            <person name="Dwight S.S."/>
            <person name="Hitz B.C."/>
            <person name="Karra K."/>
            <person name="Nash R.S."/>
            <person name="Weng S."/>
            <person name="Wong E.D."/>
            <person name="Lloyd P."/>
            <person name="Skrzypek M.S."/>
            <person name="Miyasato S.R."/>
            <person name="Simison M."/>
            <person name="Cherry J.M."/>
        </authorList>
    </citation>
    <scope>GENOME REANNOTATION</scope>
    <source>
        <strain>ATCC 204508 / S288c</strain>
    </source>
</reference>
<reference key="3">
    <citation type="journal article" date="2001" name="Dev. Cell">
        <title>The Sec34/35 Golgi transport complex is related to the exocyst, defining a family of complexes involved in multiple steps of membrane traffic.</title>
        <authorList>
            <person name="Whyte J.R."/>
            <person name="Munro S."/>
        </authorList>
    </citation>
    <scope>SUBUNIT</scope>
</reference>
<reference key="4">
    <citation type="journal article" date="2002" name="J. Cell Biol.">
        <title>The Sec34/Sec35p complex, a Ypt1p effector required for retrograde intra-Golgi trafficking, interacts with Golgi SNAREs and COPI vesicle coat proteins.</title>
        <authorList>
            <person name="Suvorova E.S."/>
            <person name="Duden R."/>
            <person name="Lupashin V.V."/>
        </authorList>
    </citation>
    <scope>IDENTIFICATION IN THE COG COMPLEX</scope>
    <scope>FUNCTION OF THE COG COMPLEX</scope>
</reference>
<reference key="5">
    <citation type="journal article" date="2002" name="Mol. Biol. Cell">
        <title>Identification of sec36p, sec37p, and sec38p: components of yeast complex that contains sec34p and sec35p.</title>
        <authorList>
            <person name="Ram R.J."/>
            <person name="Li B."/>
            <person name="Kaiser C.A."/>
        </authorList>
    </citation>
    <scope>FUNCTION</scope>
    <scope>IDENTIFICATION IN THE COG COMPLEX</scope>
</reference>
<reference key="6">
    <citation type="journal article" date="2003" name="Nature">
        <title>Global analysis of protein expression in yeast.</title>
        <authorList>
            <person name="Ghaemmaghami S."/>
            <person name="Huh W.-K."/>
            <person name="Bower K."/>
            <person name="Howson R.W."/>
            <person name="Belle A."/>
            <person name="Dephoure N."/>
            <person name="O'Shea E.K."/>
            <person name="Weissman J.S."/>
        </authorList>
    </citation>
    <scope>LEVEL OF PROTEIN EXPRESSION [LARGE SCALE ANALYSIS]</scope>
</reference>
<reference key="7">
    <citation type="journal article" date="2004" name="J. Biol. Chem.">
        <title>The binary interacting network of the conserved oligomeric Golgi tethering complex.</title>
        <authorList>
            <person name="Loh E."/>
            <person name="Hong W."/>
        </authorList>
    </citation>
    <scope>COMPOSITION OF THE COG COMPLEX</scope>
    <scope>INTERACTION WITH COG3 AND COG4</scope>
</reference>
<evidence type="ECO:0000250" key="1"/>
<evidence type="ECO:0000256" key="2">
    <source>
        <dbReference type="SAM" id="MobiDB-lite"/>
    </source>
</evidence>
<evidence type="ECO:0000269" key="3">
    <source>
    </source>
</evidence>
<evidence type="ECO:0000269" key="4">
    <source>
    </source>
</evidence>
<evidence type="ECO:0000269" key="5">
    <source>
    </source>
</evidence>
<evidence type="ECO:0000269" key="6">
    <source>
    </source>
</evidence>
<evidence type="ECO:0000305" key="7"/>